<proteinExistence type="inferred from homology"/>
<feature type="chain" id="PRO_0000390705" description="Serine/threonine-protein phosphatase Pgam5, mitochondrial">
    <location>
        <begin position="1"/>
        <end position="289"/>
    </location>
</feature>
<sequence length="289" mass="33166">MRKFTAFACGTIAGLSAYYIQRLNDPQLRVHNSWTNSETPISDCALWNSNWDFRDPKSLVRPLKNDNPQEQNRYNSELEKHVPKKARHIILIRHGEYLDVGDTDDSHHLTDRGRQQAKYTGQRLHELGITWDKVIASNMVRAQETADIILNEIDYDKANVKNCPFLREGAPIPPQPPVGHWKPEGSQFFRDGARIEAAFRRYFHRAYPEQEKESYTLIVGHGNVIRYFVCRALQFPAEAWLRISINHASITWLTISASGNVSIKYLGDSGFLPAKLLTNRIPRDAKNVV</sequence>
<comment type="function">
    <text evidence="1">Displays phosphatase activity for serine/threonine residues, and dephosphorylates and activates Pk92B kinase. Has apparently no phosphoglycerate mutase activity (By similarity).</text>
</comment>
<comment type="catalytic activity">
    <reaction>
        <text>O-phospho-L-seryl-[protein] + H2O = L-seryl-[protein] + phosphate</text>
        <dbReference type="Rhea" id="RHEA:20629"/>
        <dbReference type="Rhea" id="RHEA-COMP:9863"/>
        <dbReference type="Rhea" id="RHEA-COMP:11604"/>
        <dbReference type="ChEBI" id="CHEBI:15377"/>
        <dbReference type="ChEBI" id="CHEBI:29999"/>
        <dbReference type="ChEBI" id="CHEBI:43474"/>
        <dbReference type="ChEBI" id="CHEBI:83421"/>
        <dbReference type="EC" id="3.1.3.16"/>
    </reaction>
</comment>
<comment type="catalytic activity">
    <reaction>
        <text>O-phospho-L-threonyl-[protein] + H2O = L-threonyl-[protein] + phosphate</text>
        <dbReference type="Rhea" id="RHEA:47004"/>
        <dbReference type="Rhea" id="RHEA-COMP:11060"/>
        <dbReference type="Rhea" id="RHEA-COMP:11605"/>
        <dbReference type="ChEBI" id="CHEBI:15377"/>
        <dbReference type="ChEBI" id="CHEBI:30013"/>
        <dbReference type="ChEBI" id="CHEBI:43474"/>
        <dbReference type="ChEBI" id="CHEBI:61977"/>
        <dbReference type="EC" id="3.1.3.16"/>
    </reaction>
</comment>
<comment type="subunit">
    <text evidence="1">Interacts with Pk92B/ASK1.</text>
</comment>
<comment type="subcellular location">
    <subcellularLocation>
        <location evidence="1">Mitochondrion outer membrane</location>
    </subcellularLocation>
</comment>
<comment type="similarity">
    <text evidence="2">Belongs to the phosphoglycerate mutase family. BPG-dependent PGAM subfamily.</text>
</comment>
<keyword id="KW-0378">Hydrolase</keyword>
<keyword id="KW-0472">Membrane</keyword>
<keyword id="KW-0496">Mitochondrion</keyword>
<keyword id="KW-1000">Mitochondrion outer membrane</keyword>
<keyword id="KW-1185">Reference proteome</keyword>
<name>PGAM5_DROGR</name>
<organism>
    <name type="scientific">Drosophila grimshawi</name>
    <name type="common">Hawaiian fruit fly</name>
    <name type="synonym">Idiomyia grimshawi</name>
    <dbReference type="NCBI Taxonomy" id="7222"/>
    <lineage>
        <taxon>Eukaryota</taxon>
        <taxon>Metazoa</taxon>
        <taxon>Ecdysozoa</taxon>
        <taxon>Arthropoda</taxon>
        <taxon>Hexapoda</taxon>
        <taxon>Insecta</taxon>
        <taxon>Pterygota</taxon>
        <taxon>Neoptera</taxon>
        <taxon>Endopterygota</taxon>
        <taxon>Diptera</taxon>
        <taxon>Brachycera</taxon>
        <taxon>Muscomorpha</taxon>
        <taxon>Ephydroidea</taxon>
        <taxon>Drosophilidae</taxon>
        <taxon>Drosophila</taxon>
        <taxon>Hawaiian Drosophila</taxon>
    </lineage>
</organism>
<dbReference type="EC" id="3.1.3.16"/>
<dbReference type="EMBL" id="CH916371">
    <property type="protein sequence ID" value="EDV91970.1"/>
    <property type="molecule type" value="Genomic_DNA"/>
</dbReference>
<dbReference type="RefSeq" id="XP_001992263.1">
    <property type="nucleotide sequence ID" value="XM_001992227.1"/>
</dbReference>
<dbReference type="SMR" id="B4JMM7"/>
<dbReference type="FunCoup" id="B4JMM7">
    <property type="interactions" value="1030"/>
</dbReference>
<dbReference type="STRING" id="7222.B4JMM7"/>
<dbReference type="EnsemblMetazoa" id="FBtr0159711">
    <property type="protein sequence ID" value="FBpp0158203"/>
    <property type="gene ID" value="FBgn0131753"/>
</dbReference>
<dbReference type="EnsemblMetazoa" id="XM_001992227.2">
    <property type="protein sequence ID" value="XP_001992263.2"/>
    <property type="gene ID" value="LOC6565640"/>
</dbReference>
<dbReference type="GeneID" id="6565640"/>
<dbReference type="KEGG" id="dgr:6565640"/>
<dbReference type="CTD" id="192111"/>
<dbReference type="eggNOG" id="KOG4609">
    <property type="taxonomic scope" value="Eukaryota"/>
</dbReference>
<dbReference type="HOGENOM" id="CLU_063130_0_1_1"/>
<dbReference type="InParanoid" id="B4JMM7"/>
<dbReference type="OMA" id="QLPLFAW"/>
<dbReference type="OrthoDB" id="2118094at2759"/>
<dbReference type="PhylomeDB" id="B4JMM7"/>
<dbReference type="Proteomes" id="UP000001070">
    <property type="component" value="Unassembled WGS sequence"/>
</dbReference>
<dbReference type="GO" id="GO:0005741">
    <property type="term" value="C:mitochondrial outer membrane"/>
    <property type="evidence" value="ECO:0007669"/>
    <property type="project" value="UniProtKB-SubCell"/>
</dbReference>
<dbReference type="GO" id="GO:0004721">
    <property type="term" value="F:phosphoprotein phosphatase activity"/>
    <property type="evidence" value="ECO:0000250"/>
    <property type="project" value="UniProtKB"/>
</dbReference>
<dbReference type="GO" id="GO:0004722">
    <property type="term" value="F:protein serine/threonine phosphatase activity"/>
    <property type="evidence" value="ECO:0007669"/>
    <property type="project" value="UniProtKB-EC"/>
</dbReference>
<dbReference type="GO" id="GO:0090141">
    <property type="term" value="P:positive regulation of mitochondrial fission"/>
    <property type="evidence" value="ECO:0007669"/>
    <property type="project" value="TreeGrafter"/>
</dbReference>
<dbReference type="GO" id="GO:0006470">
    <property type="term" value="P:protein dephosphorylation"/>
    <property type="evidence" value="ECO:0000250"/>
    <property type="project" value="UniProtKB"/>
</dbReference>
<dbReference type="CDD" id="cd07067">
    <property type="entry name" value="HP_PGM_like"/>
    <property type="match status" value="1"/>
</dbReference>
<dbReference type="FunFam" id="3.40.50.1240:FF:000009">
    <property type="entry name" value="serine/threonine-protein phosphatase PGAM5, mitochondrial isoform X1"/>
    <property type="match status" value="1"/>
</dbReference>
<dbReference type="Gene3D" id="3.40.50.1240">
    <property type="entry name" value="Phosphoglycerate mutase-like"/>
    <property type="match status" value="1"/>
</dbReference>
<dbReference type="InterPro" id="IPR013078">
    <property type="entry name" value="His_Pase_superF_clade-1"/>
</dbReference>
<dbReference type="InterPro" id="IPR029033">
    <property type="entry name" value="His_PPase_superfam"/>
</dbReference>
<dbReference type="InterPro" id="IPR051021">
    <property type="entry name" value="Mito_Ser/Thr_phosphatase"/>
</dbReference>
<dbReference type="PANTHER" id="PTHR20935">
    <property type="entry name" value="PHOSPHOGLYCERATE MUTASE-RELATED"/>
    <property type="match status" value="1"/>
</dbReference>
<dbReference type="PANTHER" id="PTHR20935:SF0">
    <property type="entry name" value="SERINE_THREONINE-PROTEIN PHOSPHATASE PGAM5, MITOCHONDRIAL"/>
    <property type="match status" value="1"/>
</dbReference>
<dbReference type="Pfam" id="PF00300">
    <property type="entry name" value="His_Phos_1"/>
    <property type="match status" value="2"/>
</dbReference>
<dbReference type="SMART" id="SM00855">
    <property type="entry name" value="PGAM"/>
    <property type="match status" value="1"/>
</dbReference>
<dbReference type="SUPFAM" id="SSF53254">
    <property type="entry name" value="Phosphoglycerate mutase-like"/>
    <property type="match status" value="1"/>
</dbReference>
<protein>
    <recommendedName>
        <fullName evidence="1">Serine/threonine-protein phosphatase Pgam5, mitochondrial</fullName>
        <ecNumber>3.1.3.16</ecNumber>
    </recommendedName>
    <alternativeName>
        <fullName evidence="1">Phosphoglycerate mutase family member 5 homolog</fullName>
    </alternativeName>
</protein>
<gene>
    <name evidence="1" type="primary">Pgam5</name>
    <name type="ORF">GH24297</name>
</gene>
<reference evidence="3" key="1">
    <citation type="journal article" date="2007" name="Nature">
        <title>Evolution of genes and genomes on the Drosophila phylogeny.</title>
        <authorList>
            <consortium name="Drosophila 12 genomes consortium"/>
        </authorList>
    </citation>
    <scope>NUCLEOTIDE SEQUENCE [LARGE SCALE GENOMIC DNA]</scope>
    <source>
        <strain evidence="3">Tucson 15287-2541.00</strain>
    </source>
</reference>
<evidence type="ECO:0000250" key="1">
    <source>
        <dbReference type="UniProtKB" id="O46084"/>
    </source>
</evidence>
<evidence type="ECO:0000255" key="2"/>
<evidence type="ECO:0000312" key="3">
    <source>
        <dbReference type="EMBL" id="EDV91970.1"/>
    </source>
</evidence>
<accession>B4JMM7</accession>